<feature type="chain" id="PRO_0000072433" description="TRIO and F-actin-binding protein">
    <location>
        <begin position="1"/>
        <end position="2365"/>
    </location>
</feature>
<feature type="domain" description="PH" evidence="3">
    <location>
        <begin position="1778"/>
        <end position="1887"/>
    </location>
</feature>
<feature type="region of interest" description="Disordered" evidence="4">
    <location>
        <begin position="48"/>
        <end position="1106"/>
    </location>
</feature>
<feature type="region of interest" description="Disordered" evidence="4">
    <location>
        <begin position="1168"/>
        <end position="1554"/>
    </location>
</feature>
<feature type="region of interest" description="Disordered" evidence="4">
    <location>
        <begin position="1593"/>
        <end position="1667"/>
    </location>
</feature>
<feature type="region of interest" description="Disordered" evidence="4">
    <location>
        <begin position="1679"/>
        <end position="1751"/>
    </location>
</feature>
<feature type="region of interest" description="Disordered" evidence="4">
    <location>
        <begin position="1889"/>
        <end position="2017"/>
    </location>
</feature>
<feature type="region of interest" description="Disordered" evidence="4">
    <location>
        <begin position="2174"/>
        <end position="2194"/>
    </location>
</feature>
<feature type="coiled-coil region" evidence="2">
    <location>
        <begin position="2062"/>
        <end position="2247"/>
    </location>
</feature>
<feature type="coiled-coil region" evidence="2">
    <location>
        <begin position="2281"/>
        <end position="2361"/>
    </location>
</feature>
<feature type="compositionally biased region" description="Low complexity" evidence="4">
    <location>
        <begin position="132"/>
        <end position="151"/>
    </location>
</feature>
<feature type="compositionally biased region" description="Polar residues" evidence="4">
    <location>
        <begin position="239"/>
        <end position="271"/>
    </location>
</feature>
<feature type="compositionally biased region" description="Polar residues" evidence="4">
    <location>
        <begin position="291"/>
        <end position="375"/>
    </location>
</feature>
<feature type="compositionally biased region" description="Polar residues" evidence="4">
    <location>
        <begin position="403"/>
        <end position="422"/>
    </location>
</feature>
<feature type="compositionally biased region" description="Polar residues" evidence="4">
    <location>
        <begin position="429"/>
        <end position="471"/>
    </location>
</feature>
<feature type="compositionally biased region" description="Polar residues" evidence="4">
    <location>
        <begin position="478"/>
        <end position="520"/>
    </location>
</feature>
<feature type="compositionally biased region" description="Polar residues" evidence="4">
    <location>
        <begin position="527"/>
        <end position="569"/>
    </location>
</feature>
<feature type="compositionally biased region" description="Polar residues" evidence="4">
    <location>
        <begin position="576"/>
        <end position="618"/>
    </location>
</feature>
<feature type="compositionally biased region" description="Polar residues" evidence="4">
    <location>
        <begin position="625"/>
        <end position="650"/>
    </location>
</feature>
<feature type="compositionally biased region" description="Polar residues" evidence="4">
    <location>
        <begin position="661"/>
        <end position="674"/>
    </location>
</feature>
<feature type="compositionally biased region" description="Polar residues" evidence="4">
    <location>
        <begin position="683"/>
        <end position="701"/>
    </location>
</feature>
<feature type="compositionally biased region" description="Polar residues" evidence="4">
    <location>
        <begin position="709"/>
        <end position="722"/>
    </location>
</feature>
<feature type="compositionally biased region" description="Polar residues" evidence="4">
    <location>
        <begin position="745"/>
        <end position="785"/>
    </location>
</feature>
<feature type="compositionally biased region" description="Polar residues" evidence="4">
    <location>
        <begin position="807"/>
        <end position="837"/>
    </location>
</feature>
<feature type="compositionally biased region" description="Basic and acidic residues" evidence="4">
    <location>
        <begin position="839"/>
        <end position="854"/>
    </location>
</feature>
<feature type="compositionally biased region" description="Polar residues" evidence="4">
    <location>
        <begin position="855"/>
        <end position="898"/>
    </location>
</feature>
<feature type="compositionally biased region" description="Polar residues" evidence="4">
    <location>
        <begin position="913"/>
        <end position="927"/>
    </location>
</feature>
<feature type="compositionally biased region" description="Polar residues" evidence="4">
    <location>
        <begin position="945"/>
        <end position="994"/>
    </location>
</feature>
<feature type="compositionally biased region" description="Basic and acidic residues" evidence="4">
    <location>
        <begin position="1045"/>
        <end position="1056"/>
    </location>
</feature>
<feature type="compositionally biased region" description="Polar residues" evidence="4">
    <location>
        <begin position="1195"/>
        <end position="1206"/>
    </location>
</feature>
<feature type="compositionally biased region" description="Basic and acidic residues" evidence="4">
    <location>
        <begin position="1260"/>
        <end position="1270"/>
    </location>
</feature>
<feature type="compositionally biased region" description="Basic and acidic residues" evidence="4">
    <location>
        <begin position="1303"/>
        <end position="1319"/>
    </location>
</feature>
<feature type="compositionally biased region" description="Low complexity" evidence="4">
    <location>
        <begin position="1332"/>
        <end position="1349"/>
    </location>
</feature>
<feature type="compositionally biased region" description="Basic and acidic residues" evidence="4">
    <location>
        <begin position="1378"/>
        <end position="1387"/>
    </location>
</feature>
<feature type="compositionally biased region" description="Basic and acidic residues" evidence="4">
    <location>
        <begin position="1402"/>
        <end position="1411"/>
    </location>
</feature>
<feature type="compositionally biased region" description="Gly residues" evidence="4">
    <location>
        <begin position="1452"/>
        <end position="1461"/>
    </location>
</feature>
<feature type="compositionally biased region" description="Basic and acidic residues" evidence="4">
    <location>
        <begin position="1494"/>
        <end position="1508"/>
    </location>
</feature>
<feature type="compositionally biased region" description="Polar residues" evidence="4">
    <location>
        <begin position="1524"/>
        <end position="1534"/>
    </location>
</feature>
<feature type="compositionally biased region" description="Basic and acidic residues" evidence="4">
    <location>
        <begin position="1594"/>
        <end position="1606"/>
    </location>
</feature>
<feature type="compositionally biased region" description="Polar residues" evidence="4">
    <location>
        <begin position="1645"/>
        <end position="1664"/>
    </location>
</feature>
<feature type="compositionally biased region" description="Low complexity" evidence="4">
    <location>
        <begin position="1696"/>
        <end position="1705"/>
    </location>
</feature>
<feature type="compositionally biased region" description="Basic and acidic residues" evidence="4">
    <location>
        <begin position="1724"/>
        <end position="1735"/>
    </location>
</feature>
<feature type="compositionally biased region" description="Basic and acidic residues" evidence="4">
    <location>
        <begin position="1965"/>
        <end position="1997"/>
    </location>
</feature>
<feature type="modified residue" description="Phosphoserine" evidence="26">
    <location>
        <position position="1796"/>
    </location>
</feature>
<feature type="modified residue" description="Omega-N-methylarginine" evidence="1">
    <location>
        <position position="1930"/>
    </location>
</feature>
<feature type="modified residue" description="Phosphoserine" evidence="22 24">
    <location>
        <position position="1949"/>
    </location>
</feature>
<feature type="modified residue" description="Phosphoserine" evidence="22 23 24 25">
    <location>
        <position position="1955"/>
    </location>
</feature>
<feature type="splice variant" id="VSP_017711" description="In isoform 1." evidence="15 16">
    <location>
        <begin position="1"/>
        <end position="1772"/>
    </location>
</feature>
<feature type="splice variant" id="VSP_017712" description="In isoform 4 and isoform 5." evidence="17">
    <location>
        <begin position="1"/>
        <end position="172"/>
    </location>
</feature>
<feature type="splice variant" id="VSP_047498" description="In isoform 6 and isoform 7." evidence="16">
    <original>MEEVPGDALCEHFEANILTQNRCQNCFHPEEAHGARYQELRSPSGAEVPYCDLPRCPPAPE</original>
    <variation>MGGWKGPGQRRGKEGPEARRRAAERGGGGGGGGVPAPRSPAREPRPRSCLLLPPPWGAAMT</variation>
    <location>
        <begin position="1"/>
        <end position="61"/>
    </location>
</feature>
<feature type="splice variant" id="VSP_047499" description="In isoform 6 and isoform 7." evidence="16">
    <location>
        <begin position="62"/>
        <end position="1774"/>
    </location>
</feature>
<feature type="splice variant" id="VSP_017713" description="In isoform 5." evidence="17">
    <location>
        <begin position="1317"/>
        <end position="2365"/>
    </location>
</feature>
<feature type="splice variant" id="VSP_017714" description="In isoform 3." evidence="18">
    <location>
        <begin position="1317"/>
        <end position="1355"/>
    </location>
</feature>
<feature type="splice variant" id="VSP_017715" description="In isoform 3." evidence="18">
    <location>
        <begin position="1729"/>
        <end position="1774"/>
    </location>
</feature>
<feature type="splice variant" id="VSP_017716" description="In isoform 1." evidence="15 16">
    <original>RR</original>
    <variation>MT</variation>
    <location>
        <begin position="1773"/>
        <end position="1774"/>
    </location>
</feature>
<feature type="splice variant" id="VSP_017717" description="In isoform 3." evidence="18">
    <location>
        <begin position="1794"/>
        <end position="1806"/>
    </location>
</feature>
<feature type="splice variant" id="VSP_047500" description="In isoform 6." evidence="16">
    <original>EACERSLAEMESSHQQVMEELQRHHERELQRLQQEK</original>
    <variation>LVGVITVPVLQTRPLSSERLCDLPKVTPPAGLKGGI</variation>
    <location>
        <begin position="2109"/>
        <end position="2144"/>
    </location>
</feature>
<feature type="splice variant" id="VSP_047501" description="In isoform 6." evidence="16">
    <location>
        <begin position="2145"/>
        <end position="2365"/>
    </location>
</feature>
<feature type="sequence variant" id="VAR_059725" description="In dbSNP:rs12628603.">
    <original>S</original>
    <variation>N</variation>
    <location>
        <position position="217"/>
    </location>
</feature>
<feature type="sequence variant" id="VAR_059726" description="In dbSNP:rs4821700.">
    <original>S</original>
    <variation>N</variation>
    <location>
        <position position="493"/>
    </location>
</feature>
<feature type="sequence variant" id="VAR_061708" description="In dbSNP:rs41302575.">
    <original>T</original>
    <variation>S</variation>
    <location>
        <position position="817"/>
    </location>
</feature>
<feature type="sequence variant" id="VAR_051412" description="In dbSNP:rs9610841.">
    <original>N</original>
    <variation>K</variation>
    <location>
        <position position="863"/>
    </location>
</feature>
<feature type="sequence variant" id="VAR_025719" description="In DFNB28; dbSNP:rs549095193." evidence="8">
    <original>G</original>
    <variation>R</variation>
    <location>
        <position position="1019"/>
    </location>
</feature>
<feature type="sequence variant" id="VAR_059727" description="In dbSNP:rs5756795.">
    <original>F</original>
    <variation>L</variation>
    <location>
        <position position="1187"/>
    </location>
</feature>
<feature type="sequence variant" id="VAR_059728" description="In dbSNP:rs739138.">
    <original>H</original>
    <variation>R</variation>
    <location>
        <position position="1300"/>
    </location>
</feature>
<feature type="sequence variant" id="VAR_051413" description="In dbSNP:rs8140207.">
    <original>E</original>
    <variation>D</variation>
    <location>
        <position position="1372"/>
    </location>
</feature>
<feature type="sequence variant" id="VAR_051414" description="In dbSNP:rs8140958." evidence="6 8">
    <original>W</original>
    <variation>R</variation>
    <location>
        <position position="1377"/>
    </location>
</feature>
<feature type="sequence conflict" description="In Ref. 7; BAB33332." evidence="21" ref="7">
    <original>RTTQQEN</original>
    <variation>KSTFGCL</variation>
    <location>
        <begin position="713"/>
        <end position="719"/>
    </location>
</feature>
<feature type="sequence conflict" description="In Ref. 3; ABB77204." evidence="21" ref="3">
    <original>R</original>
    <variation>S</variation>
    <location>
        <position position="1421"/>
    </location>
</feature>
<feature type="sequence conflict" description="In Ref. 3; ABB77204." evidence="21" ref="3">
    <original>S</original>
    <variation>G</variation>
    <location>
        <position position="1689"/>
    </location>
</feature>
<feature type="sequence conflict" description="In Ref. 3; ABB77204." evidence="21" ref="3">
    <location>
        <position position="1896"/>
    </location>
</feature>
<feature type="sequence conflict" description="In Ref. 3; ABB77204." evidence="21" ref="3">
    <original>N</original>
    <variation>D</variation>
    <location>
        <position position="1904"/>
    </location>
</feature>
<feature type="sequence conflict" description="In Ref. 1; AAG44841." evidence="21" ref="1">
    <original>S</original>
    <variation>T</variation>
    <location>
        <position position="2114"/>
    </location>
</feature>
<feature type="sequence conflict" description="In Ref. 5; AAH04303." evidence="21" ref="5">
    <original>Q</original>
    <variation>L</variation>
    <location>
        <position position="2141"/>
    </location>
</feature>
<feature type="sequence conflict" description="In Ref. 1; AAG44841." evidence="21" ref="1">
    <original>S</original>
    <variation>T</variation>
    <location>
        <position position="2274"/>
    </location>
</feature>
<feature type="sequence conflict" description="In Ref. 5; AAH04303." evidence="21" ref="5">
    <original>E</original>
    <variation>EHLYPQ</variation>
    <location>
        <position position="2283"/>
    </location>
</feature>
<feature type="sequence conflict" description="In Ref. 1; AAG44841." evidence="21" ref="1">
    <original>M</original>
    <variation>I</variation>
    <location>
        <position position="2359"/>
    </location>
</feature>
<feature type="region of interest" description="Essentiel for its aggregation" evidence="13">
    <location sequence="Q9H2D6-5">
        <begin position="324"/>
        <end position="348"/>
    </location>
</feature>
<feature type="modified residue" description="Phosphothreonine" evidence="11">
    <location sequence="Q9H2D6-5">
        <position position="221"/>
    </location>
</feature>
<feature type="modified residue" description="Phosphothreonine" evidence="10">
    <location sequence="Q9H2D6-5">
        <position position="457"/>
    </location>
</feature>
<feature type="mutagenesis site" description="Does not affect interaction with TERF1. Remains associated with TERF1 at the telomere in late prometaphase cells." evidence="13">
    <original>T</original>
    <variation>A</variation>
    <location sequence="Q9H2D6-5">
        <position position="221"/>
    </location>
</feature>
<feature type="mutagenesis site" description="Abolishes interaction with TERF1." evidence="13">
    <original>T</original>
    <variation>E</variation>
    <location sequence="Q9H2D6-5">
        <position position="221"/>
    </location>
</feature>
<feature type="mutagenesis site" description="Prevents the localization of TERF1 to the centrosome." evidence="13">
    <original>T</original>
    <variation>A</variation>
    <location sequence="Q9H2D6-5">
        <position position="457"/>
    </location>
</feature>
<feature type="mutagenesis site" description="Does not affect interaction with TERF1." evidence="13">
    <original>T</original>
    <variation>E</variation>
    <location sequence="Q9H2D6-5">
        <position position="457"/>
    </location>
</feature>
<dbReference type="EMBL" id="AF281030">
    <property type="protein sequence ID" value="AAG44841.1"/>
    <property type="molecule type" value="mRNA"/>
</dbReference>
<dbReference type="EMBL" id="DQ228003">
    <property type="protein sequence ID" value="ABB59559.1"/>
    <property type="molecule type" value="mRNA"/>
</dbReference>
<dbReference type="EMBL" id="DQ228004">
    <property type="protein sequence ID" value="ABB59560.1"/>
    <property type="molecule type" value="mRNA"/>
</dbReference>
<dbReference type="EMBL" id="DQ228005">
    <property type="protein sequence ID" value="ABB59561.1"/>
    <property type="molecule type" value="mRNA"/>
</dbReference>
<dbReference type="EMBL" id="DQ278603">
    <property type="protein sequence ID" value="ABB77204.1"/>
    <property type="molecule type" value="mRNA"/>
</dbReference>
<dbReference type="EMBL" id="Z83844">
    <property type="status" value="NOT_ANNOTATED_CDS"/>
    <property type="molecule type" value="Genomic_DNA"/>
</dbReference>
<dbReference type="EMBL" id="BC003618">
    <property type="protein sequence ID" value="AAH03618.1"/>
    <property type="molecule type" value="mRNA"/>
</dbReference>
<dbReference type="EMBL" id="BC004303">
    <property type="protein sequence ID" value="AAH04303.1"/>
    <property type="molecule type" value="mRNA"/>
</dbReference>
<dbReference type="EMBL" id="BC013278">
    <property type="protein sequence ID" value="AAH13278.2"/>
    <property type="molecule type" value="mRNA"/>
</dbReference>
<dbReference type="EMBL" id="BC022200">
    <property type="status" value="NOT_ANNOTATED_CDS"/>
    <property type="molecule type" value="mRNA"/>
</dbReference>
<dbReference type="EMBL" id="AB015343">
    <property type="protein sequence ID" value="BAA34800.1"/>
    <property type="status" value="ALT_FRAME"/>
    <property type="molecule type" value="mRNA"/>
</dbReference>
<dbReference type="EMBL" id="AB051449">
    <property type="protein sequence ID" value="BAB33332.2"/>
    <property type="molecule type" value="mRNA"/>
</dbReference>
<dbReference type="CCDS" id="CCDS33644.1">
    <molecule id="Q9H2D6-6"/>
</dbReference>
<dbReference type="CCDS" id="CCDS43015.1">
    <molecule id="Q9H2D6-1"/>
</dbReference>
<dbReference type="CCDS" id="CCDS43016.1">
    <molecule id="Q9H2D6-7"/>
</dbReference>
<dbReference type="RefSeq" id="NP_001034230.1">
    <molecule id="Q9H2D6-1"/>
    <property type="nucleotide sequence ID" value="NM_001039141.3"/>
</dbReference>
<dbReference type="RefSeq" id="NP_008963.3">
    <molecule id="Q9H2D6-7"/>
    <property type="nucleotide sequence ID" value="NM_007032.5"/>
</dbReference>
<dbReference type="RefSeq" id="NP_619538.2">
    <molecule id="Q9H2D6-6"/>
    <property type="nucleotide sequence ID" value="NM_138632.2"/>
</dbReference>
<dbReference type="SMR" id="Q9H2D6"/>
<dbReference type="BioGRID" id="116261">
    <property type="interactions" value="138"/>
</dbReference>
<dbReference type="FunCoup" id="Q9H2D6">
    <property type="interactions" value="823"/>
</dbReference>
<dbReference type="IntAct" id="Q9H2D6">
    <property type="interactions" value="98"/>
</dbReference>
<dbReference type="MINT" id="Q9H2D6"/>
<dbReference type="STRING" id="9606.ENSP00000496394"/>
<dbReference type="GlyGen" id="Q9H2D6">
    <property type="glycosylation" value="4 sites, 1 O-linked glycan (2 sites)"/>
</dbReference>
<dbReference type="iPTMnet" id="Q9H2D6"/>
<dbReference type="PhosphoSitePlus" id="Q9H2D6"/>
<dbReference type="SwissPalm" id="Q9H2D6"/>
<dbReference type="BioMuta" id="TRIOBP"/>
<dbReference type="DMDM" id="90110075"/>
<dbReference type="jPOST" id="Q9H2D6"/>
<dbReference type="MassIVE" id="Q9H2D6"/>
<dbReference type="PaxDb" id="9606-ENSP00000384312"/>
<dbReference type="PeptideAtlas" id="Q9H2D6"/>
<dbReference type="ProteomicsDB" id="23821"/>
<dbReference type="ProteomicsDB" id="29844"/>
<dbReference type="ProteomicsDB" id="80531">
    <molecule id="Q9H2D6-1"/>
</dbReference>
<dbReference type="ProteomicsDB" id="80532">
    <molecule id="Q9H2D6-2"/>
</dbReference>
<dbReference type="ProteomicsDB" id="80533">
    <molecule id="Q9H2D6-3"/>
</dbReference>
<dbReference type="ProteomicsDB" id="80534">
    <molecule id="Q9H2D6-4"/>
</dbReference>
<dbReference type="ProteomicsDB" id="80535">
    <molecule id="Q9H2D6-5"/>
</dbReference>
<dbReference type="Pumba" id="Q9H2D6"/>
<dbReference type="Antibodypedia" id="288">
    <property type="antibodies" value="111 antibodies from 25 providers"/>
</dbReference>
<dbReference type="DNASU" id="11078"/>
<dbReference type="Ensembl" id="ENST00000403663.6">
    <molecule id="Q9H2D6-7"/>
    <property type="protein sequence ID" value="ENSP00000386026.2"/>
    <property type="gene ID" value="ENSG00000100106.22"/>
</dbReference>
<dbReference type="Ensembl" id="ENST00000407319.7">
    <molecule id="Q9H2D6-6"/>
    <property type="protein sequence ID" value="ENSP00000383913.2"/>
    <property type="gene ID" value="ENSG00000100106.22"/>
</dbReference>
<dbReference type="Ensembl" id="ENST00000644935.1">
    <molecule id="Q9H2D6-1"/>
    <property type="protein sequence ID" value="ENSP00000496394.1"/>
    <property type="gene ID" value="ENSG00000100106.22"/>
</dbReference>
<dbReference type="GeneID" id="11078"/>
<dbReference type="KEGG" id="hsa:11078"/>
<dbReference type="MANE-Select" id="ENST00000644935.1">
    <property type="protein sequence ID" value="ENSP00000496394.1"/>
    <property type="RefSeq nucleotide sequence ID" value="NM_001039141.3"/>
    <property type="RefSeq protein sequence ID" value="NP_001034230.1"/>
</dbReference>
<dbReference type="UCSC" id="uc003atr.4">
    <molecule id="Q9H2D6-1"/>
    <property type="organism name" value="human"/>
</dbReference>
<dbReference type="AGR" id="HGNC:17009"/>
<dbReference type="CTD" id="11078"/>
<dbReference type="DisGeNET" id="11078"/>
<dbReference type="GeneCards" id="TRIOBP"/>
<dbReference type="GeneReviews" id="TRIOBP"/>
<dbReference type="HGNC" id="HGNC:17009">
    <property type="gene designation" value="TRIOBP"/>
</dbReference>
<dbReference type="HPA" id="ENSG00000100106">
    <property type="expression patterns" value="Low tissue specificity"/>
</dbReference>
<dbReference type="MalaCards" id="TRIOBP"/>
<dbReference type="MIM" id="609761">
    <property type="type" value="gene"/>
</dbReference>
<dbReference type="MIM" id="609823">
    <property type="type" value="phenotype"/>
</dbReference>
<dbReference type="neXtProt" id="NX_Q9H2D6"/>
<dbReference type="OpenTargets" id="ENSG00000100106"/>
<dbReference type="Orphanet" id="90636">
    <property type="disease" value="Rare autosomal recessive non-syndromic sensorineural deafness type DFNB"/>
</dbReference>
<dbReference type="PharmGKB" id="PA142670699"/>
<dbReference type="VEuPathDB" id="HostDB:ENSG00000100106"/>
<dbReference type="eggNOG" id="KOG4807">
    <property type="taxonomic scope" value="Eukaryota"/>
</dbReference>
<dbReference type="GeneTree" id="ENSGT00940000157340"/>
<dbReference type="HOGENOM" id="CLU_231134_0_0_1"/>
<dbReference type="InParanoid" id="Q9H2D6"/>
<dbReference type="OMA" id="NSRTSCA"/>
<dbReference type="OrthoDB" id="9942268at2759"/>
<dbReference type="PAN-GO" id="Q9H2D6">
    <property type="GO annotations" value="4 GO annotations based on evolutionary models"/>
</dbReference>
<dbReference type="PhylomeDB" id="Q9H2D6"/>
<dbReference type="TreeFam" id="TF343361"/>
<dbReference type="PathwayCommons" id="Q9H2D6"/>
<dbReference type="Reactome" id="R-HSA-9662360">
    <property type="pathway name" value="Sensory processing of sound by inner hair cells of the cochlea"/>
</dbReference>
<dbReference type="Reactome" id="R-HSA-9662361">
    <property type="pathway name" value="Sensory processing of sound by outer hair cells of the cochlea"/>
</dbReference>
<dbReference type="SignaLink" id="Q9H2D6"/>
<dbReference type="SIGNOR" id="Q9H2D6"/>
<dbReference type="BioGRID-ORCS" id="11078">
    <property type="hits" value="18 hits in 1161 CRISPR screens"/>
</dbReference>
<dbReference type="ChiTaRS" id="TRIOBP">
    <property type="organism name" value="human"/>
</dbReference>
<dbReference type="GeneWiki" id="TRIOBP"/>
<dbReference type="GenomeRNAi" id="11078"/>
<dbReference type="Pharos" id="Q9H2D6">
    <property type="development level" value="Tbio"/>
</dbReference>
<dbReference type="PRO" id="PR:Q9H2D6"/>
<dbReference type="Proteomes" id="UP000005640">
    <property type="component" value="Chromosome 22"/>
</dbReference>
<dbReference type="RNAct" id="Q9H2D6">
    <property type="molecule type" value="protein"/>
</dbReference>
<dbReference type="Bgee" id="ENSG00000100106">
    <property type="expression patterns" value="Expressed in lower lobe of lung and 208 other cell types or tissues"/>
</dbReference>
<dbReference type="ExpressionAtlas" id="Q9H2D6">
    <property type="expression patterns" value="baseline and differential"/>
</dbReference>
<dbReference type="GO" id="GO:0015629">
    <property type="term" value="C:actin cytoskeleton"/>
    <property type="evidence" value="ECO:0000314"/>
    <property type="project" value="MGI"/>
</dbReference>
<dbReference type="GO" id="GO:0005813">
    <property type="term" value="C:centrosome"/>
    <property type="evidence" value="ECO:0007669"/>
    <property type="project" value="UniProtKB-SubCell"/>
</dbReference>
<dbReference type="GO" id="GO:0000781">
    <property type="term" value="C:chromosome, telomeric region"/>
    <property type="evidence" value="ECO:0007669"/>
    <property type="project" value="UniProtKB-SubCell"/>
</dbReference>
<dbReference type="GO" id="GO:0005737">
    <property type="term" value="C:cytoplasm"/>
    <property type="evidence" value="ECO:0007669"/>
    <property type="project" value="UniProtKB-KW"/>
</dbReference>
<dbReference type="GO" id="GO:0005925">
    <property type="term" value="C:focal adhesion"/>
    <property type="evidence" value="ECO:0007005"/>
    <property type="project" value="UniProtKB"/>
</dbReference>
<dbReference type="GO" id="GO:0030496">
    <property type="term" value="C:midbody"/>
    <property type="evidence" value="ECO:0007669"/>
    <property type="project" value="UniProtKB-SubCell"/>
</dbReference>
<dbReference type="GO" id="GO:0005634">
    <property type="term" value="C:nucleus"/>
    <property type="evidence" value="ECO:0007669"/>
    <property type="project" value="UniProtKB-SubCell"/>
</dbReference>
<dbReference type="GO" id="GO:0120044">
    <property type="term" value="C:stereocilium base"/>
    <property type="evidence" value="ECO:0007669"/>
    <property type="project" value="Ensembl"/>
</dbReference>
<dbReference type="GO" id="GO:0051015">
    <property type="term" value="F:actin filament binding"/>
    <property type="evidence" value="ECO:0000314"/>
    <property type="project" value="MGI"/>
</dbReference>
<dbReference type="GO" id="GO:0045159">
    <property type="term" value="F:myosin II binding"/>
    <property type="evidence" value="ECO:0000303"/>
    <property type="project" value="UniProtKB"/>
</dbReference>
<dbReference type="GO" id="GO:0031267">
    <property type="term" value="F:small GTPase binding"/>
    <property type="evidence" value="ECO:0000303"/>
    <property type="project" value="UniProtKB"/>
</dbReference>
<dbReference type="GO" id="GO:0031625">
    <property type="term" value="F:ubiquitin protein ligase binding"/>
    <property type="evidence" value="ECO:0000353"/>
    <property type="project" value="UniProtKB"/>
</dbReference>
<dbReference type="GO" id="GO:0030047">
    <property type="term" value="P:actin modification"/>
    <property type="evidence" value="ECO:0000303"/>
    <property type="project" value="UniProtKB"/>
</dbReference>
<dbReference type="GO" id="GO:0060088">
    <property type="term" value="P:auditory receptor cell stereocilium organization"/>
    <property type="evidence" value="ECO:0007669"/>
    <property type="project" value="Ensembl"/>
</dbReference>
<dbReference type="GO" id="GO:0051016">
    <property type="term" value="P:barbed-end actin filament capping"/>
    <property type="evidence" value="ECO:0000303"/>
    <property type="project" value="UniProtKB"/>
</dbReference>
<dbReference type="GO" id="GO:0051301">
    <property type="term" value="P:cell division"/>
    <property type="evidence" value="ECO:0007669"/>
    <property type="project" value="UniProtKB-KW"/>
</dbReference>
<dbReference type="GO" id="GO:1900026">
    <property type="term" value="P:positive regulation of substrate adhesion-dependent cell spreading"/>
    <property type="evidence" value="ECO:0000314"/>
    <property type="project" value="MGI"/>
</dbReference>
<dbReference type="GO" id="GO:0007605">
    <property type="term" value="P:sensory perception of sound"/>
    <property type="evidence" value="ECO:0007669"/>
    <property type="project" value="Ensembl"/>
</dbReference>
<dbReference type="CDD" id="cd13275">
    <property type="entry name" value="PH_M-RIP"/>
    <property type="match status" value="1"/>
</dbReference>
<dbReference type="FunFam" id="2.30.29.30:FF:000133">
    <property type="entry name" value="myosin phosphatase Rho-interacting protein isoform X1"/>
    <property type="match status" value="1"/>
</dbReference>
<dbReference type="Gene3D" id="2.30.29.30">
    <property type="entry name" value="Pleckstrin-homology domain (PH domain)/Phosphotyrosine-binding domain (PTB)"/>
    <property type="match status" value="1"/>
</dbReference>
<dbReference type="InterPro" id="IPR052223">
    <property type="entry name" value="Actin_Cytoskeleton_Reg"/>
</dbReference>
<dbReference type="InterPro" id="IPR039597">
    <property type="entry name" value="M-RIP_PH"/>
</dbReference>
<dbReference type="InterPro" id="IPR011993">
    <property type="entry name" value="PH-like_dom_sf"/>
</dbReference>
<dbReference type="InterPro" id="IPR001849">
    <property type="entry name" value="PH_domain"/>
</dbReference>
<dbReference type="PANTHER" id="PTHR17271">
    <property type="entry name" value="PLECKSTRIN HOMOLOGY PH DOMAIN-CONTAINING PROTEIN"/>
    <property type="match status" value="1"/>
</dbReference>
<dbReference type="PANTHER" id="PTHR17271:SF10">
    <property type="entry name" value="TRIO AND F-ACTIN-BINDING PROTEIN"/>
    <property type="match status" value="1"/>
</dbReference>
<dbReference type="Pfam" id="PF00169">
    <property type="entry name" value="PH"/>
    <property type="match status" value="1"/>
</dbReference>
<dbReference type="SMART" id="SM00233">
    <property type="entry name" value="PH"/>
    <property type="match status" value="1"/>
</dbReference>
<dbReference type="SUPFAM" id="SSF50729">
    <property type="entry name" value="PH domain-like"/>
    <property type="match status" value="1"/>
</dbReference>
<dbReference type="PROSITE" id="PS50003">
    <property type="entry name" value="PH_DOMAIN"/>
    <property type="match status" value="1"/>
</dbReference>
<reference key="1">
    <citation type="journal article" date="2001" name="J. Cell Sci.">
        <title>Tara, a novel F-actin binding protein, associates with the Trio guanine nucleotide exchange factor and regulates actin cytoskeletal organization.</title>
        <authorList>
            <person name="Seipel K."/>
            <person name="O'Brien S.P."/>
            <person name="Iannotti E."/>
            <person name="Medley Q.G."/>
            <person name="Streuli M."/>
        </authorList>
    </citation>
    <scope>NUCLEOTIDE SEQUENCE [MRNA] (ISOFORM 1)</scope>
    <scope>INTERACTION WITH TRIO AND ACTIN (ISOFORM 1)</scope>
    <scope>TISSUE SPECIFICITY (ISOFORM 1)</scope>
</reference>
<reference key="2">
    <citation type="journal article" date="2006" name="Am. J. Hum. Genet.">
        <title>Mutations in TRIOBP, which encodes a putative cytoskeletal-organizing protein, are associated with nonsyndromic recessive deafness.</title>
        <authorList>
            <person name="Riazuddin S."/>
            <person name="Khan S.N."/>
            <person name="Ahmed Z.M."/>
            <person name="Ghosh M."/>
            <person name="Caution K."/>
            <person name="Nazli S."/>
            <person name="Kabra M."/>
            <person name="Zafar A.U."/>
            <person name="Chen K."/>
            <person name="Naz S."/>
            <person name="Antonellis A."/>
            <person name="Pavan W.J."/>
            <person name="Green E.D."/>
            <person name="Wilcox E.R."/>
            <person name="Friedman P.L."/>
            <person name="Morell R.J."/>
            <person name="Riazuddin S."/>
            <person name="Friedman T.B."/>
        </authorList>
    </citation>
    <scope>NUCLEOTIDE SEQUENCE [MRNA] (ISOFORMS 2; 4 AND 5)</scope>
    <scope>INVOLVEMENT IN DFNB28</scope>
    <source>
        <tissue>Inner ear</tissue>
    </source>
</reference>
<reference key="3">
    <citation type="journal article" date="2006" name="Am. J. Hum. Genet.">
        <title>Mutations in a novel isoform of TRIOBP that encodes a filamentous-actin binding protein are responsible for DFNB28 recessive nonsyndromic hearing loss.</title>
        <authorList>
            <person name="Shahin H."/>
            <person name="Walsh T."/>
            <person name="Sobe T."/>
            <person name="Abu Sa'ed J."/>
            <person name="Abu Rayan A."/>
            <person name="Lynch E.D."/>
            <person name="Lee M.K."/>
            <person name="Avraham K.B."/>
            <person name="King M.-C."/>
            <person name="Kanaan M."/>
        </authorList>
    </citation>
    <scope>NUCLEOTIDE SEQUENCE [MRNA] (ISOFORM 3)</scope>
    <scope>TISSUE SPECIFICITY</scope>
    <scope>VARIANTS DFNB28 ARG-1019 AND ARG-1377</scope>
    <source>
        <tissue>Brain</tissue>
    </source>
</reference>
<reference key="4">
    <citation type="journal article" date="1999" name="Nature">
        <title>The DNA sequence of human chromosome 22.</title>
        <authorList>
            <person name="Dunham I."/>
            <person name="Hunt A.R."/>
            <person name="Collins J.E."/>
            <person name="Bruskiewich R."/>
            <person name="Beare D.M."/>
            <person name="Clamp M."/>
            <person name="Smink L.J."/>
            <person name="Ainscough R."/>
            <person name="Almeida J.P."/>
            <person name="Babbage A.K."/>
            <person name="Bagguley C."/>
            <person name="Bailey J."/>
            <person name="Barlow K.F."/>
            <person name="Bates K.N."/>
            <person name="Beasley O.P."/>
            <person name="Bird C.P."/>
            <person name="Blakey S.E."/>
            <person name="Bridgeman A.M."/>
            <person name="Buck D."/>
            <person name="Burgess J."/>
            <person name="Burrill W.D."/>
            <person name="Burton J."/>
            <person name="Carder C."/>
            <person name="Carter N.P."/>
            <person name="Chen Y."/>
            <person name="Clark G."/>
            <person name="Clegg S.M."/>
            <person name="Cobley V.E."/>
            <person name="Cole C.G."/>
            <person name="Collier R.E."/>
            <person name="Connor R."/>
            <person name="Conroy D."/>
            <person name="Corby N.R."/>
            <person name="Coville G.J."/>
            <person name="Cox A.V."/>
            <person name="Davis J."/>
            <person name="Dawson E."/>
            <person name="Dhami P.D."/>
            <person name="Dockree C."/>
            <person name="Dodsworth S.J."/>
            <person name="Durbin R.M."/>
            <person name="Ellington A.G."/>
            <person name="Evans K.L."/>
            <person name="Fey J.M."/>
            <person name="Fleming K."/>
            <person name="French L."/>
            <person name="Garner A.A."/>
            <person name="Gilbert J.G.R."/>
            <person name="Goward M.E."/>
            <person name="Grafham D.V."/>
            <person name="Griffiths M.N.D."/>
            <person name="Hall C."/>
            <person name="Hall R.E."/>
            <person name="Hall-Tamlyn G."/>
            <person name="Heathcott R.W."/>
            <person name="Ho S."/>
            <person name="Holmes S."/>
            <person name="Hunt S.E."/>
            <person name="Jones M.C."/>
            <person name="Kershaw J."/>
            <person name="Kimberley A.M."/>
            <person name="King A."/>
            <person name="Laird G.K."/>
            <person name="Langford C.F."/>
            <person name="Leversha M.A."/>
            <person name="Lloyd C."/>
            <person name="Lloyd D.M."/>
            <person name="Martyn I.D."/>
            <person name="Mashreghi-Mohammadi M."/>
            <person name="Matthews L.H."/>
            <person name="Mccann O.T."/>
            <person name="Mcclay J."/>
            <person name="Mclaren S."/>
            <person name="McMurray A.A."/>
            <person name="Milne S.A."/>
            <person name="Mortimore B.J."/>
            <person name="Odell C.N."/>
            <person name="Pavitt R."/>
            <person name="Pearce A.V."/>
            <person name="Pearson D."/>
            <person name="Phillimore B.J.C.T."/>
            <person name="Phillips S.H."/>
            <person name="Plumb R.W."/>
            <person name="Ramsay H."/>
            <person name="Ramsey Y."/>
            <person name="Rogers L."/>
            <person name="Ross M.T."/>
            <person name="Scott C.E."/>
            <person name="Sehra H.K."/>
            <person name="Skuce C.D."/>
            <person name="Smalley S."/>
            <person name="Smith M.L."/>
            <person name="Soderlund C."/>
            <person name="Spragon L."/>
            <person name="Steward C.A."/>
            <person name="Sulston J.E."/>
            <person name="Swann R.M."/>
            <person name="Vaudin M."/>
            <person name="Wall M."/>
            <person name="Wallis J.M."/>
            <person name="Whiteley M.N."/>
            <person name="Willey D.L."/>
            <person name="Williams L."/>
            <person name="Williams S.A."/>
            <person name="Williamson H."/>
            <person name="Wilmer T.E."/>
            <person name="Wilming L."/>
            <person name="Wright C.L."/>
            <person name="Hubbard T."/>
            <person name="Bentley D.R."/>
            <person name="Beck S."/>
            <person name="Rogers J."/>
            <person name="Shimizu N."/>
            <person name="Minoshima S."/>
            <person name="Kawasaki K."/>
            <person name="Sasaki T."/>
            <person name="Asakawa S."/>
            <person name="Kudoh J."/>
            <person name="Shintani A."/>
            <person name="Shibuya K."/>
            <person name="Yoshizaki Y."/>
            <person name="Aoki N."/>
            <person name="Mitsuyama S."/>
            <person name="Roe B.A."/>
            <person name="Chen F."/>
            <person name="Chu L."/>
            <person name="Crabtree J."/>
            <person name="Deschamps S."/>
            <person name="Do A."/>
            <person name="Do T."/>
            <person name="Dorman A."/>
            <person name="Fang F."/>
            <person name="Fu Y."/>
            <person name="Hu P."/>
            <person name="Hua A."/>
            <person name="Kenton S."/>
            <person name="Lai H."/>
            <person name="Lao H.I."/>
            <person name="Lewis J."/>
            <person name="Lewis S."/>
            <person name="Lin S.-P."/>
            <person name="Loh P."/>
            <person name="Malaj E."/>
            <person name="Nguyen T."/>
            <person name="Pan H."/>
            <person name="Phan S."/>
            <person name="Qi S."/>
            <person name="Qian Y."/>
            <person name="Ray L."/>
            <person name="Ren Q."/>
            <person name="Shaull S."/>
            <person name="Sloan D."/>
            <person name="Song L."/>
            <person name="Wang Q."/>
            <person name="Wang Y."/>
            <person name="Wang Z."/>
            <person name="White J."/>
            <person name="Willingham D."/>
            <person name="Wu H."/>
            <person name="Yao Z."/>
            <person name="Zhan M."/>
            <person name="Zhang G."/>
            <person name="Chissoe S."/>
            <person name="Murray J."/>
            <person name="Miller N."/>
            <person name="Minx P."/>
            <person name="Fulton R."/>
            <person name="Johnson D."/>
            <person name="Bemis G."/>
            <person name="Bentley D."/>
            <person name="Bradshaw H."/>
            <person name="Bourne S."/>
            <person name="Cordes M."/>
            <person name="Du Z."/>
            <person name="Fulton L."/>
            <person name="Goela D."/>
            <person name="Graves T."/>
            <person name="Hawkins J."/>
            <person name="Hinds K."/>
            <person name="Kemp K."/>
            <person name="Latreille P."/>
            <person name="Layman D."/>
            <person name="Ozersky P."/>
            <person name="Rohlfing T."/>
            <person name="Scheet P."/>
            <person name="Walker C."/>
            <person name="Wamsley A."/>
            <person name="Wohldmann P."/>
            <person name="Pepin K."/>
            <person name="Nelson J."/>
            <person name="Korf I."/>
            <person name="Bedell J.A."/>
            <person name="Hillier L.W."/>
            <person name="Mardis E."/>
            <person name="Waterston R."/>
            <person name="Wilson R."/>
            <person name="Emanuel B.S."/>
            <person name="Shaikh T."/>
            <person name="Kurahashi H."/>
            <person name="Saitta S."/>
            <person name="Budarf M.L."/>
            <person name="McDermid H.E."/>
            <person name="Johnson A."/>
            <person name="Wong A.C.C."/>
            <person name="Morrow B.E."/>
            <person name="Edelmann L."/>
            <person name="Kim U.J."/>
            <person name="Shizuya H."/>
            <person name="Simon M.I."/>
            <person name="Dumanski J.P."/>
            <person name="Peyrard M."/>
            <person name="Kedra D."/>
            <person name="Seroussi E."/>
            <person name="Fransson I."/>
            <person name="Tapia I."/>
            <person name="Bruder C.E."/>
            <person name="O'Brien K.P."/>
            <person name="Wilkinson P."/>
            <person name="Bodenteich A."/>
            <person name="Hartman K."/>
            <person name="Hu X."/>
            <person name="Khan A.S."/>
            <person name="Lane L."/>
            <person name="Tilahun Y."/>
            <person name="Wright H."/>
        </authorList>
    </citation>
    <scope>NUCLEOTIDE SEQUENCE [LARGE SCALE GENOMIC DNA]</scope>
</reference>
<reference key="5">
    <citation type="journal article" date="2004" name="Genome Res.">
        <title>The status, quality, and expansion of the NIH full-length cDNA project: the Mammalian Gene Collection (MGC).</title>
        <authorList>
            <consortium name="The MGC Project Team"/>
        </authorList>
    </citation>
    <scope>NUCLEOTIDE SEQUENCE [LARGE SCALE MRNA] (ISOFORM 1)</scope>
    <scope>NUCLEOTIDE SEQUENCE [LARGE SCALE MRNA] OF 2-431 (ISOFORM 6)</scope>
    <source>
        <tissue>Colon</tissue>
        <tissue>Pancreas</tissue>
    </source>
</reference>
<reference key="6">
    <citation type="journal article" date="1998" name="Nat. Biotechnol.">
        <title>Selection system for genes encoding nuclear-targeted proteins.</title>
        <authorList>
            <person name="Ueki N."/>
            <person name="Oda T."/>
            <person name="Kondo M."/>
            <person name="Yano K."/>
            <person name="Noguchi T."/>
            <person name="Muramatsu M.-A."/>
        </authorList>
    </citation>
    <scope>NUCLEOTIDE SEQUENCE [LARGE SCALE MRNA] OF 340-563</scope>
    <scope>SUBCELLULAR LOCATION</scope>
    <source>
        <tissue>Fetal brain</tissue>
    </source>
</reference>
<reference key="7">
    <citation type="journal article" date="2001" name="DNA Res.">
        <title>Identification of novel transcribed sequences on human chromosome 22 by expressed sequence tag mapping.</title>
        <authorList>
            <person name="Hirosawa M."/>
            <person name="Nagase T."/>
            <person name="Murahashi Y."/>
            <person name="Kikuno R."/>
            <person name="Ohara O."/>
        </authorList>
    </citation>
    <scope>NUCLEOTIDE SEQUENCE [LARGE SCALE MRNA] OF 713-2365</scope>
    <scope>VARIANT ARG-1377</scope>
    <source>
        <tissue>Brain</tissue>
    </source>
</reference>
<reference key="8">
    <citation type="journal article" date="2002" name="DNA Res.">
        <title>Construction of expression-ready cDNA clones for KIAA genes: manual curation of 330 KIAA cDNA clones.</title>
        <authorList>
            <person name="Nakajima D."/>
            <person name="Okazaki N."/>
            <person name="Yamakawa H."/>
            <person name="Kikuno R."/>
            <person name="Ohara O."/>
            <person name="Nagase T."/>
        </authorList>
    </citation>
    <scope>SEQUENCE REVISION</scope>
</reference>
<reference key="9">
    <citation type="journal article" date="2008" name="Biochem. Biophys. Res. Commun.">
        <title>The E3 ubiquitin ligase HECTD3 regulates ubiquitination and degradation of Tara.</title>
        <authorList>
            <person name="Yu J."/>
            <person name="Lan J."/>
            <person name="Zhu Y."/>
            <person name="Li X."/>
            <person name="Lai X."/>
            <person name="Xue Y."/>
            <person name="Jin C."/>
            <person name="Huang H."/>
        </authorList>
    </citation>
    <scope>FUNCTION (ISOFORM 1)</scope>
    <scope>INTERACTION WITH HECTD3 (ISOFORM 1)</scope>
    <scope>UBIQUITINATION (ISOFORM 1)</scope>
</reference>
<reference key="10">
    <citation type="journal article" date="2008" name="Proc. Natl. Acad. Sci. U.S.A.">
        <title>A quantitative atlas of mitotic phosphorylation.</title>
        <authorList>
            <person name="Dephoure N."/>
            <person name="Zhou C."/>
            <person name="Villen J."/>
            <person name="Beausoleil S.A."/>
            <person name="Bakalarski C.E."/>
            <person name="Elledge S.J."/>
            <person name="Gygi S.P."/>
        </authorList>
    </citation>
    <scope>PHOSPHORYLATION [LARGE SCALE ANALYSIS] AT SER-1949 AND SER-1955</scope>
    <scope>IDENTIFICATION BY MASS SPECTROMETRY [LARGE SCALE ANALYSIS]</scope>
    <source>
        <tissue>Cervix carcinoma</tissue>
    </source>
</reference>
<reference key="11">
    <citation type="journal article" date="2009" name="Mol. Cell. Proteomics">
        <title>Large-scale proteomics analysis of the human kinome.</title>
        <authorList>
            <person name="Oppermann F.S."/>
            <person name="Gnad F."/>
            <person name="Olsen J.V."/>
            <person name="Hornberger R."/>
            <person name="Greff Z."/>
            <person name="Keri G."/>
            <person name="Mann M."/>
            <person name="Daub H."/>
        </authorList>
    </citation>
    <scope>PHOSPHORYLATION [LARGE SCALE ANALYSIS] AT SER-1955</scope>
    <scope>IDENTIFICATION BY MASS SPECTROMETRY [LARGE SCALE ANALYSIS]</scope>
</reference>
<reference key="12">
    <citation type="journal article" date="2010" name="Sci. Signal.">
        <title>Quantitative phosphoproteomics reveals widespread full phosphorylation site occupancy during mitosis.</title>
        <authorList>
            <person name="Olsen J.V."/>
            <person name="Vermeulen M."/>
            <person name="Santamaria A."/>
            <person name="Kumar C."/>
            <person name="Miller M.L."/>
            <person name="Jensen L.J."/>
            <person name="Gnad F."/>
            <person name="Cox J."/>
            <person name="Jensen T.S."/>
            <person name="Nigg E.A."/>
            <person name="Brunak S."/>
            <person name="Mann M."/>
        </authorList>
    </citation>
    <scope>PHOSPHORYLATION [LARGE SCALE ANALYSIS] AT SER-1949 AND SER-1955</scope>
    <scope>IDENTIFICATION BY MASS SPECTROMETRY [LARGE SCALE ANALYSIS]</scope>
    <source>
        <tissue>Cervix carcinoma</tissue>
    </source>
</reference>
<reference key="13">
    <citation type="journal article" date="2011" name="Sci. Signal.">
        <title>System-wide temporal characterization of the proteome and phosphoproteome of human embryonic stem cell differentiation.</title>
        <authorList>
            <person name="Rigbolt K.T."/>
            <person name="Prokhorova T.A."/>
            <person name="Akimov V."/>
            <person name="Henningsen J."/>
            <person name="Johansen P.T."/>
            <person name="Kratchmarova I."/>
            <person name="Kassem M."/>
            <person name="Mann M."/>
            <person name="Olsen J.V."/>
            <person name="Blagoev B."/>
        </authorList>
    </citation>
    <scope>IDENTIFICATION BY MASS SPECTROMETRY [LARGE SCALE ANALYSIS]</scope>
</reference>
<reference key="14">
    <citation type="journal article" date="2012" name="Exp. Cell Res.">
        <title>Phosphorylation of Tara by Plk1 is essential for faithful chromosome segregation in mitosis.</title>
        <authorList>
            <person name="Zhu Y."/>
            <person name="Wang C."/>
            <person name="Lan J."/>
            <person name="Yu J."/>
            <person name="Jin C."/>
            <person name="Huang H."/>
        </authorList>
    </citation>
    <scope>PHOSPHORYLATION AT THR-457 (ISOFORM 1)</scope>
    <scope>SUBCELLULAR LOCATION (ISOFORM 1)</scope>
    <scope>FUNCTION (ISOFORM 1)</scope>
</reference>
<reference key="15">
    <citation type="journal article" date="2013" name="J. Proteome Res.">
        <title>Toward a comprehensive characterization of a human cancer cell phosphoproteome.</title>
        <authorList>
            <person name="Zhou H."/>
            <person name="Di Palma S."/>
            <person name="Preisinger C."/>
            <person name="Peng M."/>
            <person name="Polat A.N."/>
            <person name="Heck A.J."/>
            <person name="Mohammed S."/>
        </authorList>
    </citation>
    <scope>PHOSPHORYLATION [LARGE SCALE ANALYSIS] AT SER-1955</scope>
    <scope>IDENTIFICATION BY MASS SPECTROMETRY [LARGE SCALE ANALYSIS]</scope>
    <source>
        <tissue>Cervix carcinoma</tissue>
    </source>
</reference>
<reference key="16">
    <citation type="journal article" date="2014" name="J. Biol. Chem.">
        <title>The 68-kDa telomeric repeat binding factor 1 (TRF1)-associated protein (TAP68) interacts with and recruits TRF1 to the spindle pole during mitosis.</title>
        <authorList>
            <person name="Lan J."/>
            <person name="Zhu Y."/>
            <person name="Xu L."/>
            <person name="Yu H."/>
            <person name="Yu J."/>
            <person name="Liu X."/>
            <person name="Fu C."/>
            <person name="Wang X."/>
            <person name="Ke Y."/>
            <person name="Huang H."/>
            <person name="Dou Z."/>
        </authorList>
    </citation>
    <scope>PHOSPHORYLATION AT THR-221 AND THR-457 (ISOFORM 1)</scope>
    <scope>SUBCELLULAR LOCATION (ISOFORM 1)</scope>
    <scope>FUNCTION (ISOFORM 1)</scope>
    <scope>INTERACTION WITH TERF1 (ISOFORM 1)</scope>
</reference>
<reference key="17">
    <citation type="journal article" date="2014" name="J. Proteomics">
        <title>An enzyme assisted RP-RPLC approach for in-depth analysis of human liver phosphoproteome.</title>
        <authorList>
            <person name="Bian Y."/>
            <person name="Song C."/>
            <person name="Cheng K."/>
            <person name="Dong M."/>
            <person name="Wang F."/>
            <person name="Huang J."/>
            <person name="Sun D."/>
            <person name="Wang L."/>
            <person name="Ye M."/>
            <person name="Zou H."/>
        </authorList>
    </citation>
    <scope>PHOSPHORYLATION [LARGE SCALE ANALYSIS] AT SER-1796</scope>
    <scope>IDENTIFICATION BY MASS SPECTROMETRY [LARGE SCALE ANALYSIS]</scope>
    <source>
        <tissue>Liver</tissue>
    </source>
</reference>
<reference key="18">
    <citation type="journal article" date="2014" name="PLoS ONE">
        <title>Aggregation of the protein TRIOBP-1 and its potential relevance to schizophrenia.</title>
        <authorList>
            <person name="Bradshaw N.J."/>
            <person name="Bader V."/>
            <person name="Prikulis I."/>
            <person name="Lueking A."/>
            <person name="Muellner S."/>
            <person name="Korth C."/>
        </authorList>
    </citation>
    <scope>SUBUNIT</scope>
    <scope>AGGREGATION IN SCHIZOPHRENIA DISEASE</scope>
</reference>
<reference key="19">
    <citation type="journal article" date="2015" name="Proteomics">
        <title>N-terminome analysis of the human mitochondrial proteome.</title>
        <authorList>
            <person name="Vaca Jacome A.S."/>
            <person name="Rabilloud T."/>
            <person name="Schaeffer-Reiss C."/>
            <person name="Rompais M."/>
            <person name="Ayoub D."/>
            <person name="Lane L."/>
            <person name="Bairoch A."/>
            <person name="Van Dorsselaer A."/>
            <person name="Carapito C."/>
        </authorList>
    </citation>
    <scope>IDENTIFICATION BY MASS SPECTROMETRY [LARGE SCALE ANALYSIS]</scope>
</reference>
<reference key="20">
    <citation type="journal article" date="2017" name="J. Biol. Chem.">
        <title>An unpredicted aggregation-critical region of the actin-polymerizing protein TRIOBP-1/Tara, determined by elucidation of its domain structure.</title>
        <authorList>
            <person name="Bradshaw N.J."/>
            <person name="Yerabham A.S.K."/>
            <person name="Marreiros R."/>
            <person name="Zhang T."/>
            <person name="Nagel-Steger L."/>
            <person name="Korth C."/>
        </authorList>
    </citation>
    <scope>FUNCTION (ISOFORM 1)</scope>
    <scope>INTERACTION WITH ACTIN (ISOFORM 1)</scope>
    <scope>SUBUNIT (ISOFORM 1)</scope>
    <scope>MUTAGENESIS OF THR-221 AND THR-457 (ISOFORM 1)</scope>
</reference>
<gene>
    <name type="primary">TRIOBP</name>
    <name type="synonym">KIAA1662</name>
    <name evidence="15" type="synonym">TARA</name>
    <name type="ORF">HRIHFB2122</name>
</gene>
<proteinExistence type="evidence at protein level"/>
<keyword id="KW-0009">Actin-binding</keyword>
<keyword id="KW-0877">Alternative promoter usage</keyword>
<keyword id="KW-0025">Alternative splicing</keyword>
<keyword id="KW-0131">Cell cycle</keyword>
<keyword id="KW-0132">Cell division</keyword>
<keyword id="KW-0158">Chromosome</keyword>
<keyword id="KW-0175">Coiled coil</keyword>
<keyword id="KW-0963">Cytoplasm</keyword>
<keyword id="KW-0206">Cytoskeleton</keyword>
<keyword id="KW-0209">Deafness</keyword>
<keyword id="KW-0225">Disease variant</keyword>
<keyword id="KW-0488">Methylation</keyword>
<keyword id="KW-0498">Mitosis</keyword>
<keyword id="KW-1010">Non-syndromic deafness</keyword>
<keyword id="KW-0539">Nucleus</keyword>
<keyword id="KW-0597">Phosphoprotein</keyword>
<keyword id="KW-1267">Proteomics identification</keyword>
<keyword id="KW-1185">Reference proteome</keyword>
<keyword id="KW-0779">Telomere</keyword>
<keyword id="KW-0832">Ubl conjugation</keyword>
<comment type="function">
    <molecule>Isoform 1</molecule>
    <text evidence="9 10 11 13">Regulates actin cytoskeletal organization, cell spreading and cell contraction by directly binding and stabilizing filamentous F-actin and prevents its depolymerization (PubMed:18194665, PubMed:28438837). May also serve as a linker protein to recruit proteins required for F-actin formation and turnover (PubMed:18194665). Essential for correct mitotic progression (PubMed:22820163, PubMed:24692559).</text>
</comment>
<comment type="function">
    <molecule>Isoform 5</molecule>
    <text evidence="1">Plays a pivotal role in the formation of stereocilia rootlets.</text>
</comment>
<comment type="function">
    <molecule>Isoform 4</molecule>
    <text evidence="1">Plays a pivotal role in the formation of stereocilia rootlets.</text>
</comment>
<comment type="subunit">
    <text evidence="1 5 9 11 12 13">Isoform 1 forms aggregates (PubMed:25333879, PubMed:28438837). Isoform 1 binds to TRIO and F-actin (PubMed:11148140, PubMed:28438837). Isoform 1 may also interact with myosin II (PubMed:11148140). Interacts with HECTD3 (PubMed:18194665). Interacts with PJVK (By similarity). Interacts with TERF1; mediates TERF1 localization to the centrosome (PubMed:24692559).</text>
</comment>
<comment type="subcellular location">
    <subcellularLocation>
        <location evidence="14">Nucleus</location>
    </subcellularLocation>
</comment>
<comment type="subcellular location">
    <molecule>Isoform 1</molecule>
    <subcellularLocation>
        <location evidence="10">Nucleus</location>
    </subcellularLocation>
    <subcellularLocation>
        <location evidence="10 11">Cytoplasm</location>
        <location evidence="10 11">Cytoskeleton</location>
        <location evidence="10 11">Microtubule organizing center</location>
        <location evidence="10 11">Centrosome</location>
    </subcellularLocation>
    <subcellularLocation>
        <location evidence="10">Midbody</location>
    </subcellularLocation>
    <subcellularLocation>
        <location evidence="11">Chromosome</location>
        <location evidence="11">Telomere</location>
    </subcellularLocation>
    <text evidence="10">Centrosomal localization occurs upon phosphorylation by PLK1 at Thr-457 and lasts from prophase to anaphase. At telophase, relocalizes to midbody.</text>
</comment>
<comment type="alternative products">
    <event type="alternative promoter"/>
    <event type="alternative splicing"/>
    <isoform>
        <id>Q9H2D6-1</id>
        <name>2</name>
        <name evidence="17">TRIOBP-6</name>
        <sequence type="displayed"/>
    </isoform>
    <isoform>
        <id>Q9H2D6-2</id>
        <name>3</name>
        <name evidence="18">Long isoform</name>
        <sequence type="described" ref="VSP_017714 VSP_017715 VSP_017717"/>
    </isoform>
    <isoform>
        <id>Q9H2D6-3</id>
        <name>4</name>
        <name evidence="17">TRIOBP-5</name>
        <sequence type="described" ref="VSP_017712"/>
    </isoform>
    <isoform>
        <id>Q9H2D6-4</id>
        <name>5</name>
        <name evidence="17">TRIOBP-4</name>
        <sequence type="described" ref="VSP_017712 VSP_017713"/>
    </isoform>
    <isoform>
        <id>Q9H2D6-5</id>
        <name>1</name>
        <name evidence="15">TRIOBP-1</name>
        <name evidence="19">TAP68</name>
        <name evidence="20">TARA</name>
        <sequence type="described" ref="VSP_017711 VSP_017716"/>
    </isoform>
    <isoform>
        <id>Q9H2D6-6</id>
        <name>6</name>
        <sequence type="described" ref="VSP_047498 VSP_047499 VSP_047500 VSP_047501"/>
    </isoform>
    <isoform>
        <id>Q9H2D6-7</id>
        <name>7</name>
        <sequence type="described" ref="VSP_047498 VSP_047499"/>
    </isoform>
</comment>
<comment type="tissue specificity">
    <molecule>Isoform 1</molecule>
    <text evidence="5">Widely expressed. Highly expressed in heart and placenta.</text>
</comment>
<comment type="tissue specificity">
    <molecule>Isoform 3</molecule>
    <text evidence="8">Expressed in fetal brain, retina and cochlea but is not detectable in the other tissues.</text>
</comment>
<comment type="domain">
    <text>Contains at least 2 actin-binding sites per coiled-coil dimer.</text>
</comment>
<comment type="PTM">
    <molecule>Isoform 1</molecule>
    <text evidence="9">Ubiquitinated by HECTD3, leading to its degradation by the proteasome.</text>
</comment>
<comment type="PTM">
    <molecule>Isoform 1</molecule>
    <text evidence="10 11">Phosphorylation at Thr-457 by PLK1 ensures mitotic progression and is essential for accurate chromosome segregation (PubMed:22820163). Phosphorylation at residues Thr-221 and Thr-457 by kinase NEK2A and PLK1 coordinates TERF1 translocation from telomere to spindle pole (PubMed:24692559).</text>
</comment>
<comment type="disease" evidence="7 8">
    <disease id="DI-00868">
        <name>Deafness, autosomal recessive, 28</name>
        <acronym>DFNB28</acronym>
        <description>A form of non-syndromic sensorineural hearing loss. Sensorineural deafness results from damage to the neural receptors of the inner ear, the nerve pathways to the brain, or the area of the brain that receives sound information.</description>
        <dbReference type="MIM" id="609823"/>
    </disease>
    <text>The disease is caused by variants affecting the gene represented in this entry.</text>
</comment>
<comment type="miscellaneous">
    <molecule>Isoform 1</molecule>
    <text evidence="12">Insoluble aggregates is found in the brain of schizophrenia patients.</text>
</comment>
<comment type="miscellaneous">
    <molecule>Isoform 1</molecule>
    <text evidence="21">Produced by alternative promoter usage.</text>
</comment>
<comment type="miscellaneous">
    <molecule>Isoform 2</molecule>
    <text evidence="21">Produced by alternative promoter usage.</text>
</comment>
<comment type="miscellaneous">
    <molecule>Isoform 3</molecule>
    <text evidence="21">Produced by alternative splicing of isoform 1.</text>
</comment>
<comment type="miscellaneous">
    <molecule>Isoform 4</molecule>
    <text evidence="21">Produced by alternative splicing of isoform 2.</text>
</comment>
<comment type="miscellaneous">
    <molecule>Isoform 5</molecule>
    <text evidence="21">Produced by alternative splicing of isoform 2.</text>
</comment>
<comment type="miscellaneous">
    <molecule>Isoform 6</molecule>
    <text evidence="21">Produced by alternative splicing of isoform 1.</text>
</comment>
<comment type="miscellaneous">
    <molecule>Isoform 7</molecule>
    <text evidence="21">Produced by alternative splicing of isoform 1.</text>
</comment>
<comment type="sequence caution" evidence="21">
    <conflict type="frameshift">
        <sequence resource="EMBL-CDS" id="BAA34800"/>
    </conflict>
</comment>
<accession>Q9H2D6</accession>
<accession>B1AHD4</accession>
<accession>B1AHD7</accession>
<accession>F2Z2W0</accession>
<accession>F8W6V6</accession>
<accession>O94797</accession>
<accession>Q2PZW8</accession>
<accession>Q2Q3Z9</accession>
<accession>Q2Q400</accession>
<accession>Q5R3M6</accession>
<accession>Q96DW1</accession>
<accession>Q9BT77</accession>
<accession>Q9BTL7</accession>
<accession>Q9BY98</accession>
<accession>Q9Y3L4</accession>
<protein>
    <recommendedName>
        <fullName>TRIO and F-actin-binding protein</fullName>
    </recommendedName>
    <alternativeName>
        <fullName>Protein Tara</fullName>
    </alternativeName>
    <alternativeName>
        <fullName evidence="19">TRF1-associated protein of 68 kDa</fullName>
    </alternativeName>
    <alternativeName>
        <fullName>Trio-associated repeat on actin</fullName>
    </alternativeName>
</protein>
<evidence type="ECO:0000250" key="1">
    <source>
        <dbReference type="UniProtKB" id="Q99KW3"/>
    </source>
</evidence>
<evidence type="ECO:0000255" key="2"/>
<evidence type="ECO:0000255" key="3">
    <source>
        <dbReference type="PROSITE-ProRule" id="PRU00145"/>
    </source>
</evidence>
<evidence type="ECO:0000256" key="4">
    <source>
        <dbReference type="SAM" id="MobiDB-lite"/>
    </source>
</evidence>
<evidence type="ECO:0000269" key="5">
    <source>
    </source>
</evidence>
<evidence type="ECO:0000269" key="6">
    <source>
    </source>
</evidence>
<evidence type="ECO:0000269" key="7">
    <source>
    </source>
</evidence>
<evidence type="ECO:0000269" key="8">
    <source>
    </source>
</evidence>
<evidence type="ECO:0000269" key="9">
    <source>
    </source>
</evidence>
<evidence type="ECO:0000269" key="10">
    <source>
    </source>
</evidence>
<evidence type="ECO:0000269" key="11">
    <source>
    </source>
</evidence>
<evidence type="ECO:0000269" key="12">
    <source>
    </source>
</evidence>
<evidence type="ECO:0000269" key="13">
    <source>
    </source>
</evidence>
<evidence type="ECO:0000269" key="14">
    <source>
    </source>
</evidence>
<evidence type="ECO:0000303" key="15">
    <source>
    </source>
</evidence>
<evidence type="ECO:0000303" key="16">
    <source>
    </source>
</evidence>
<evidence type="ECO:0000303" key="17">
    <source>
    </source>
</evidence>
<evidence type="ECO:0000303" key="18">
    <source>
    </source>
</evidence>
<evidence type="ECO:0000303" key="19">
    <source>
    </source>
</evidence>
<evidence type="ECO:0000303" key="20">
    <source>
    </source>
</evidence>
<evidence type="ECO:0000305" key="21"/>
<evidence type="ECO:0007744" key="22">
    <source>
    </source>
</evidence>
<evidence type="ECO:0007744" key="23">
    <source>
    </source>
</evidence>
<evidence type="ECO:0007744" key="24">
    <source>
    </source>
</evidence>
<evidence type="ECO:0007744" key="25">
    <source>
    </source>
</evidence>
<evidence type="ECO:0007744" key="26">
    <source>
    </source>
</evidence>
<sequence length="2365" mass="261376">MEEVPGDALCEHFEANILTQNRCQNCFHPEEAHGARYQELRSPSGAEVPYCDLPRCPPAPEDPLSASTSGCQSVVDPGLRPGPKRGPSPSAGLPEEGPTAAPRSRSRELEAVPYLEGLTTSLCGSCNEDPGSDPTSSPDSATPDDTSNSSSVDWDTVERQEEEAPSWDELAVMIPRRPREGPRADSSQRAPSLLTRSPVGGDAAGQKKEDTGGGGRSAGQHWARLRGESGLSLERHRSTLTQASSMTPHSGPRSTTSQASPAQRDTAQAASTREIPRASSPHRITQRDTSRASSTQQEISRASSTQQETSRASSTQEDTPRASSTQEDTPRASSTQWNTPRASSPSRSTQLDNPRTSSTQQDNPQTSFPTCTPQRENPRTPCVQQDDPRASSPNRTTQRENSRTSCAQRDNPKASRTSSPNRATRDNPRTSCAQRDNPRASSPSRATRDNPTTSCAQRDNPRASRTSSPNRATRDNPRTSCAQRDNPRASSPSRATRDNPTTSCAQRDNPRASRTSSPNRATRDNPRTSCAQRDNPRASSPNRAARDNPTTSCAQRDNPRASRTSSPNRATRDNPRTSCAQRDNPRASSPNRATRDNPTTSCAQRDNPRASRTSSPNRATRDNPRTSCAQRDNPRASSPNRTTQQDSPRTSCARRDDPRASSPNRTIQQENPRTSCALRDNPRASSPSRTIQQENPRTSCAQRDDPRASSPNRTTQQENPRTSCARRDNPRASSRNRTIQRDNPRTSCAQRDNPRASSPNRTIQQENLRTSCTRQDNPRTSSPNRATRDNPRTSCAQRDNLRASSPIRATQQDNPRTCIQQNIPRSSSTQQDNPKTSCTKRDNLRPTCTQRDRTQSFSFQRDNPGTSSSQCCTQKENLRPSSPHRSTQWNNPRNSSPHRTNKDIPWASFPLRPTQSDGPRTSSPSRSKQSEVPWASIALRPTQGDRPQTSSPSRPAQHDPPQSSFGPTQYNLPSRATSSSHNPGHQSTSRTSSPVYPAAYGAPLTSPEPSQPPCAVCIGHRDAPRASSPPRYLQHDPFPFFPEPRAPESEPPHHEPPYIPPAVCIGHRDAPRASSPPRHTQFDPFPFLPDTSDAEHQCQSPQHEPLQLPAPVCIGYRDAPRASSPPRQAPEPSLLFQDLPRASTESLVPSMDSLHECPHIPTPVCIGHRDAPSFSSPPRQAPEPSLFFQDPPGTSMESLAPSTDSLHGSPVLIPQVCIGHRDAPRASSPPRHPPSDLAFLAPSPSPGSSGGSRGSAPPGETRHNLEREEYTVLADLPPPRRLAQRQPGPQAQCSSGGRTHSPGRAEVERLFGQERRKSEAAGAFQAQDEGRSQQPSQGQSQLLRRQSSPAPSRQVTMLPAKQAELTRRSQAEPPHPWSPEKRPEGDRQLQGSPLPPRTSARTPERELRTQRPLESGQAGPRQPLGVWQSQEEPPGSQGPHRHLERSWSSQEGGLGPGGWWGCGEPSLGAAKAPEGAWGGTSREYKESWGQPEAWEEKPTHELPRELGKRSPLTSPPENWGGPAESSQSWHSGTPTAVGWGAEGACPYPRGSERRPELDWRDLLGLLRAPGEGVWARVPSLDWEGLLELLQARLPRKDPAGHRDDLARALGPELGPPGTNDVPEQESHSQPEGWAEATPVNGHSPALQSQSPVQLPSPACTSTQWPKIKVTRGPATATLAGLEQTGPLGSRSTAKGPSLPELQFQPEEPEESEPSRGQDPLTDQKQADSADKRPAEGKAGSPLKGRLVTSWRMPGDRPTLFNPFLLSLGVLRWRRPDLLNFKKGWMSILDEPGEPPSPSLTTTSTSQWKKHWFVLTDSSLKYYRDSTAEEADELDGEIDLRSCTDVTEYAVQRNYGFQIHTKDAVYTLSAMTSGIRRNWIEALRKTVRPTSAPDVTKLSDSNKENALHSYSTQKGPLKAGEQRAGSEVISRGGPRKADGQRQALDYVELSPLTQASPQRARTPARTPDRLAKQEELERDLAQRSEERRKWFEATDSRTPEVPAGEGPRRGLGAPLTEDQQNRLSEEIEKKWQELEKLPLRENKRVPLTALLNQSRGERRGPPSDGHEALEKEVQALRAQLEAWRLQGEAPQSALRSQEDGHIPPGYISQEACERSLAEMESSHQQVMEELQRHHERELQRLQQEKEWLLAEETAATASAIEAMKKAYQEELSRELSKTRSLQQGPDGLRKQHQSDVEALKRELQVLSEQYSQKCLEIGALMRQAEEREHTLRRCQQEGQELLRHNQELHGRLSEEIDQLRGFIASQGMGNGCGRSNERSSCELEVLLRVKENELQYLKKEVQCLRDELQMMQKDKRFTSGKYQDVYVELSHIKTRSEREIEQLKEHLRLAMAALQEKESMRNSLAE</sequence>
<organism>
    <name type="scientific">Homo sapiens</name>
    <name type="common">Human</name>
    <dbReference type="NCBI Taxonomy" id="9606"/>
    <lineage>
        <taxon>Eukaryota</taxon>
        <taxon>Metazoa</taxon>
        <taxon>Chordata</taxon>
        <taxon>Craniata</taxon>
        <taxon>Vertebrata</taxon>
        <taxon>Euteleostomi</taxon>
        <taxon>Mammalia</taxon>
        <taxon>Eutheria</taxon>
        <taxon>Euarchontoglires</taxon>
        <taxon>Primates</taxon>
        <taxon>Haplorrhini</taxon>
        <taxon>Catarrhini</taxon>
        <taxon>Hominidae</taxon>
        <taxon>Homo</taxon>
    </lineage>
</organism>
<name>TARA_HUMAN</name>